<name>HSLO_CROS8</name>
<comment type="function">
    <text evidence="1">Redox regulated molecular chaperone. Protects both thermally unfolding and oxidatively damaged proteins from irreversible aggregation. Plays an important role in the bacterial defense system toward oxidative stress.</text>
</comment>
<comment type="subcellular location">
    <subcellularLocation>
        <location evidence="1">Cytoplasm</location>
    </subcellularLocation>
</comment>
<comment type="PTM">
    <text evidence="1">Under oxidizing conditions two disulfide bonds are formed involving the reactive cysteines. Under reducing conditions zinc is bound to the reactive cysteines and the protein is inactive.</text>
</comment>
<comment type="similarity">
    <text evidence="1">Belongs to the HSP33 family.</text>
</comment>
<organism>
    <name type="scientific">Cronobacter sakazakii (strain ATCC BAA-894)</name>
    <name type="common">Enterobacter sakazakii</name>
    <dbReference type="NCBI Taxonomy" id="290339"/>
    <lineage>
        <taxon>Bacteria</taxon>
        <taxon>Pseudomonadati</taxon>
        <taxon>Pseudomonadota</taxon>
        <taxon>Gammaproteobacteria</taxon>
        <taxon>Enterobacterales</taxon>
        <taxon>Enterobacteriaceae</taxon>
        <taxon>Cronobacter</taxon>
    </lineage>
</organism>
<keyword id="KW-0143">Chaperone</keyword>
<keyword id="KW-0963">Cytoplasm</keyword>
<keyword id="KW-1015">Disulfide bond</keyword>
<keyword id="KW-0676">Redox-active center</keyword>
<keyword id="KW-1185">Reference proteome</keyword>
<keyword id="KW-0862">Zinc</keyword>
<protein>
    <recommendedName>
        <fullName evidence="1">33 kDa chaperonin</fullName>
    </recommendedName>
    <alternativeName>
        <fullName evidence="1">Heat shock protein 33 homolog</fullName>
        <shortName evidence="1">HSP33</shortName>
    </alternativeName>
</protein>
<sequence>MAQHDQLHRYLFENYAVRGELVTVSETWKQILENHDYPMPVKTLLGELLVATSLLTATLKFAGDITVQLQGDGPMTLAVINGNNRQQMRGVARVQGDVPADADLKTLVGNGYLVITITPEEGERYQGVVGLEGDTLAACLEDYFMRSEQLPTRLFIRTGEAQGQPAAGGMLLQVLPAQDAQTDDFNHLATLTETIKADELFTLPANDVLWRLYHEEEVTVYDPQAVEFKCTCSRERCADALRTLPDEEVAQILEEDGEVDMHCDYCGTHYVFDAMDIAGIRKNASPADPQVH</sequence>
<dbReference type="EMBL" id="CP000783">
    <property type="protein sequence ID" value="ABU79519.1"/>
    <property type="molecule type" value="Genomic_DNA"/>
</dbReference>
<dbReference type="RefSeq" id="WP_007778775.1">
    <property type="nucleotide sequence ID" value="NC_009778.1"/>
</dbReference>
<dbReference type="SMR" id="A7MGD1"/>
<dbReference type="GeneID" id="45713842"/>
<dbReference type="KEGG" id="esa:ESA_04340"/>
<dbReference type="HOGENOM" id="CLU_054493_0_0_6"/>
<dbReference type="Proteomes" id="UP000000260">
    <property type="component" value="Chromosome"/>
</dbReference>
<dbReference type="GO" id="GO:0005737">
    <property type="term" value="C:cytoplasm"/>
    <property type="evidence" value="ECO:0007669"/>
    <property type="project" value="UniProtKB-SubCell"/>
</dbReference>
<dbReference type="GO" id="GO:0044183">
    <property type="term" value="F:protein folding chaperone"/>
    <property type="evidence" value="ECO:0007669"/>
    <property type="project" value="TreeGrafter"/>
</dbReference>
<dbReference type="GO" id="GO:0051082">
    <property type="term" value="F:unfolded protein binding"/>
    <property type="evidence" value="ECO:0007669"/>
    <property type="project" value="UniProtKB-UniRule"/>
</dbReference>
<dbReference type="GO" id="GO:0042026">
    <property type="term" value="P:protein refolding"/>
    <property type="evidence" value="ECO:0007669"/>
    <property type="project" value="TreeGrafter"/>
</dbReference>
<dbReference type="CDD" id="cd00498">
    <property type="entry name" value="Hsp33"/>
    <property type="match status" value="1"/>
</dbReference>
<dbReference type="Gene3D" id="1.10.287.480">
    <property type="entry name" value="helix hairpin bin"/>
    <property type="match status" value="1"/>
</dbReference>
<dbReference type="Gene3D" id="3.55.30.10">
    <property type="entry name" value="Hsp33 domain"/>
    <property type="match status" value="1"/>
</dbReference>
<dbReference type="Gene3D" id="3.90.1280.10">
    <property type="entry name" value="HSP33 redox switch-like"/>
    <property type="match status" value="1"/>
</dbReference>
<dbReference type="HAMAP" id="MF_00117">
    <property type="entry name" value="HslO"/>
    <property type="match status" value="1"/>
</dbReference>
<dbReference type="InterPro" id="IPR000397">
    <property type="entry name" value="Heat_shock_Hsp33"/>
</dbReference>
<dbReference type="InterPro" id="IPR016154">
    <property type="entry name" value="Heat_shock_Hsp33_C"/>
</dbReference>
<dbReference type="InterPro" id="IPR016153">
    <property type="entry name" value="Heat_shock_Hsp33_N"/>
</dbReference>
<dbReference type="InterPro" id="IPR023212">
    <property type="entry name" value="Hsp33_helix_hairpin_bin_dom_sf"/>
</dbReference>
<dbReference type="NCBIfam" id="NF001033">
    <property type="entry name" value="PRK00114.1"/>
    <property type="match status" value="1"/>
</dbReference>
<dbReference type="PANTHER" id="PTHR30111">
    <property type="entry name" value="33 KDA CHAPERONIN"/>
    <property type="match status" value="1"/>
</dbReference>
<dbReference type="PANTHER" id="PTHR30111:SF1">
    <property type="entry name" value="33 KDA CHAPERONIN"/>
    <property type="match status" value="1"/>
</dbReference>
<dbReference type="Pfam" id="PF01430">
    <property type="entry name" value="HSP33"/>
    <property type="match status" value="1"/>
</dbReference>
<dbReference type="PIRSF" id="PIRSF005261">
    <property type="entry name" value="Heat_shock_Hsp33"/>
    <property type="match status" value="1"/>
</dbReference>
<dbReference type="SUPFAM" id="SSF64397">
    <property type="entry name" value="Hsp33 domain"/>
    <property type="match status" value="1"/>
</dbReference>
<dbReference type="SUPFAM" id="SSF118352">
    <property type="entry name" value="HSP33 redox switch-like"/>
    <property type="match status" value="1"/>
</dbReference>
<proteinExistence type="inferred from homology"/>
<evidence type="ECO:0000255" key="1">
    <source>
        <dbReference type="HAMAP-Rule" id="MF_00117"/>
    </source>
</evidence>
<gene>
    <name evidence="1" type="primary">hslO</name>
    <name type="ordered locus">ESA_04340</name>
</gene>
<feature type="chain" id="PRO_1000015541" description="33 kDa chaperonin">
    <location>
        <begin position="1"/>
        <end position="292"/>
    </location>
</feature>
<feature type="disulfide bond" description="Redox-active" evidence="1">
    <location>
        <begin position="230"/>
        <end position="232"/>
    </location>
</feature>
<feature type="disulfide bond" description="Redox-active" evidence="1">
    <location>
        <begin position="263"/>
        <end position="266"/>
    </location>
</feature>
<accession>A7MGD1</accession>
<reference key="1">
    <citation type="journal article" date="2010" name="PLoS ONE">
        <title>Genome sequence of Cronobacter sakazakii BAA-894 and comparative genomic hybridization analysis with other Cronobacter species.</title>
        <authorList>
            <person name="Kucerova E."/>
            <person name="Clifton S.W."/>
            <person name="Xia X.Q."/>
            <person name="Long F."/>
            <person name="Porwollik S."/>
            <person name="Fulton L."/>
            <person name="Fronick C."/>
            <person name="Minx P."/>
            <person name="Kyung K."/>
            <person name="Warren W."/>
            <person name="Fulton R."/>
            <person name="Feng D."/>
            <person name="Wollam A."/>
            <person name="Shah N."/>
            <person name="Bhonagiri V."/>
            <person name="Nash W.E."/>
            <person name="Hallsworth-Pepin K."/>
            <person name="Wilson R.K."/>
            <person name="McClelland M."/>
            <person name="Forsythe S.J."/>
        </authorList>
    </citation>
    <scope>NUCLEOTIDE SEQUENCE [LARGE SCALE GENOMIC DNA]</scope>
    <source>
        <strain>ATCC BAA-894</strain>
    </source>
</reference>